<gene>
    <name type="ordered locus">YE1782</name>
</gene>
<name>Y1782_YERE8</name>
<feature type="chain" id="PRO_1000014973" description="UPF0181 protein YE1782">
    <location>
        <begin position="1"/>
        <end position="85"/>
    </location>
</feature>
<feature type="region of interest" description="Disordered" evidence="2">
    <location>
        <begin position="1"/>
        <end position="22"/>
    </location>
</feature>
<feature type="region of interest" description="Disordered" evidence="2">
    <location>
        <begin position="57"/>
        <end position="85"/>
    </location>
</feature>
<feature type="compositionally biased region" description="Basic and acidic residues" evidence="2">
    <location>
        <begin position="9"/>
        <end position="21"/>
    </location>
</feature>
<feature type="compositionally biased region" description="Acidic residues" evidence="2">
    <location>
        <begin position="74"/>
        <end position="85"/>
    </location>
</feature>
<dbReference type="EMBL" id="AM286415">
    <property type="protein sequence ID" value="CAL11853.1"/>
    <property type="molecule type" value="Genomic_DNA"/>
</dbReference>
<dbReference type="RefSeq" id="WP_005163637.1">
    <property type="nucleotide sequence ID" value="NC_008800.1"/>
</dbReference>
<dbReference type="RefSeq" id="YP_001006058.1">
    <property type="nucleotide sequence ID" value="NC_008800.1"/>
</dbReference>
<dbReference type="SMR" id="A1JLK7"/>
<dbReference type="KEGG" id="yen:YE1782"/>
<dbReference type="PATRIC" id="fig|393305.7.peg.1933"/>
<dbReference type="eggNOG" id="COG3140">
    <property type="taxonomic scope" value="Bacteria"/>
</dbReference>
<dbReference type="HOGENOM" id="CLU_185263_0_0_6"/>
<dbReference type="OrthoDB" id="6522084at2"/>
<dbReference type="Proteomes" id="UP000000642">
    <property type="component" value="Chromosome"/>
</dbReference>
<dbReference type="HAMAP" id="MF_00507">
    <property type="entry name" value="UPF0181"/>
    <property type="match status" value="1"/>
</dbReference>
<dbReference type="InterPro" id="IPR005371">
    <property type="entry name" value="UPF0181"/>
</dbReference>
<dbReference type="NCBIfam" id="NF003476">
    <property type="entry name" value="PRK05114.1"/>
    <property type="match status" value="1"/>
</dbReference>
<dbReference type="Pfam" id="PF03701">
    <property type="entry name" value="UPF0181"/>
    <property type="match status" value="1"/>
</dbReference>
<proteinExistence type="inferred from homology"/>
<comment type="similarity">
    <text evidence="1">Belongs to the UPF0181 family.</text>
</comment>
<evidence type="ECO:0000255" key="1">
    <source>
        <dbReference type="HAMAP-Rule" id="MF_00507"/>
    </source>
</evidence>
<evidence type="ECO:0000256" key="2">
    <source>
        <dbReference type="SAM" id="MobiDB-lite"/>
    </source>
</evidence>
<reference key="1">
    <citation type="journal article" date="2006" name="PLoS Genet.">
        <title>The complete genome sequence and comparative genome analysis of the high pathogenicity Yersinia enterocolitica strain 8081.</title>
        <authorList>
            <person name="Thomson N.R."/>
            <person name="Howard S."/>
            <person name="Wren B.W."/>
            <person name="Holden M.T.G."/>
            <person name="Crossman L."/>
            <person name="Challis G.L."/>
            <person name="Churcher C."/>
            <person name="Mungall K."/>
            <person name="Brooks K."/>
            <person name="Chillingworth T."/>
            <person name="Feltwell T."/>
            <person name="Abdellah Z."/>
            <person name="Hauser H."/>
            <person name="Jagels K."/>
            <person name="Maddison M."/>
            <person name="Moule S."/>
            <person name="Sanders M."/>
            <person name="Whitehead S."/>
            <person name="Quail M.A."/>
            <person name="Dougan G."/>
            <person name="Parkhill J."/>
            <person name="Prentice M.B."/>
        </authorList>
    </citation>
    <scope>NUCLEOTIDE SEQUENCE [LARGE SCALE GENOMIC DNA]</scope>
    <source>
        <strain>NCTC 13174 / 8081</strain>
    </source>
</reference>
<organism>
    <name type="scientific">Yersinia enterocolitica serotype O:8 / biotype 1B (strain NCTC 13174 / 8081)</name>
    <dbReference type="NCBI Taxonomy" id="393305"/>
    <lineage>
        <taxon>Bacteria</taxon>
        <taxon>Pseudomonadati</taxon>
        <taxon>Pseudomonadota</taxon>
        <taxon>Gammaproteobacteria</taxon>
        <taxon>Enterobacterales</taxon>
        <taxon>Yersiniaceae</taxon>
        <taxon>Yersinia</taxon>
    </lineage>
</organism>
<sequence>MLAGMPSLSHEEQQEAVERIHQFMSEGMSSGEAIALVAAEIRERHQNDPQAMAIFEDTDFDEHDESDYRRDNEQDADEIEDPYEG</sequence>
<protein>
    <recommendedName>
        <fullName evidence="1">UPF0181 protein YE1782</fullName>
    </recommendedName>
</protein>
<accession>A1JLK7</accession>